<reference key="1">
    <citation type="journal article" date="2000" name="Nature">
        <title>Sequence and analysis of chromosome 1 of the plant Arabidopsis thaliana.</title>
        <authorList>
            <person name="Theologis A."/>
            <person name="Ecker J.R."/>
            <person name="Palm C.J."/>
            <person name="Federspiel N.A."/>
            <person name="Kaul S."/>
            <person name="White O."/>
            <person name="Alonso J."/>
            <person name="Altafi H."/>
            <person name="Araujo R."/>
            <person name="Bowman C.L."/>
            <person name="Brooks S.Y."/>
            <person name="Buehler E."/>
            <person name="Chan A."/>
            <person name="Chao Q."/>
            <person name="Chen H."/>
            <person name="Cheuk R.F."/>
            <person name="Chin C.W."/>
            <person name="Chung M.K."/>
            <person name="Conn L."/>
            <person name="Conway A.B."/>
            <person name="Conway A.R."/>
            <person name="Creasy T.H."/>
            <person name="Dewar K."/>
            <person name="Dunn P."/>
            <person name="Etgu P."/>
            <person name="Feldblyum T.V."/>
            <person name="Feng J.-D."/>
            <person name="Fong B."/>
            <person name="Fujii C.Y."/>
            <person name="Gill J.E."/>
            <person name="Goldsmith A.D."/>
            <person name="Haas B."/>
            <person name="Hansen N.F."/>
            <person name="Hughes B."/>
            <person name="Huizar L."/>
            <person name="Hunter J.L."/>
            <person name="Jenkins J."/>
            <person name="Johnson-Hopson C."/>
            <person name="Khan S."/>
            <person name="Khaykin E."/>
            <person name="Kim C.J."/>
            <person name="Koo H.L."/>
            <person name="Kremenetskaia I."/>
            <person name="Kurtz D.B."/>
            <person name="Kwan A."/>
            <person name="Lam B."/>
            <person name="Langin-Hooper S."/>
            <person name="Lee A."/>
            <person name="Lee J.M."/>
            <person name="Lenz C.A."/>
            <person name="Li J.H."/>
            <person name="Li Y.-P."/>
            <person name="Lin X."/>
            <person name="Liu S.X."/>
            <person name="Liu Z.A."/>
            <person name="Luros J.S."/>
            <person name="Maiti R."/>
            <person name="Marziali A."/>
            <person name="Militscher J."/>
            <person name="Miranda M."/>
            <person name="Nguyen M."/>
            <person name="Nierman W.C."/>
            <person name="Osborne B.I."/>
            <person name="Pai G."/>
            <person name="Peterson J."/>
            <person name="Pham P.K."/>
            <person name="Rizzo M."/>
            <person name="Rooney T."/>
            <person name="Rowley D."/>
            <person name="Sakano H."/>
            <person name="Salzberg S.L."/>
            <person name="Schwartz J.R."/>
            <person name="Shinn P."/>
            <person name="Southwick A.M."/>
            <person name="Sun H."/>
            <person name="Tallon L.J."/>
            <person name="Tambunga G."/>
            <person name="Toriumi M.J."/>
            <person name="Town C.D."/>
            <person name="Utterback T."/>
            <person name="Van Aken S."/>
            <person name="Vaysberg M."/>
            <person name="Vysotskaia V.S."/>
            <person name="Walker M."/>
            <person name="Wu D."/>
            <person name="Yu G."/>
            <person name="Fraser C.M."/>
            <person name="Venter J.C."/>
            <person name="Davis R.W."/>
        </authorList>
    </citation>
    <scope>NUCLEOTIDE SEQUENCE [LARGE SCALE GENOMIC DNA]</scope>
    <source>
        <strain>cv. Columbia</strain>
    </source>
</reference>
<reference key="2">
    <citation type="journal article" date="2017" name="Plant J.">
        <title>Araport11: a complete reannotation of the Arabidopsis thaliana reference genome.</title>
        <authorList>
            <person name="Cheng C.Y."/>
            <person name="Krishnakumar V."/>
            <person name="Chan A.P."/>
            <person name="Thibaud-Nissen F."/>
            <person name="Schobel S."/>
            <person name="Town C.D."/>
        </authorList>
    </citation>
    <scope>GENOME REANNOTATION</scope>
    <source>
        <strain>cv. Columbia</strain>
    </source>
</reference>
<reference key="3">
    <citation type="journal article" date="2002" name="Science">
        <title>Functional annotation of a full-length Arabidopsis cDNA collection.</title>
        <authorList>
            <person name="Seki M."/>
            <person name="Narusaka M."/>
            <person name="Kamiya A."/>
            <person name="Ishida J."/>
            <person name="Satou M."/>
            <person name="Sakurai T."/>
            <person name="Nakajima M."/>
            <person name="Enju A."/>
            <person name="Akiyama K."/>
            <person name="Oono Y."/>
            <person name="Muramatsu M."/>
            <person name="Hayashizaki Y."/>
            <person name="Kawai J."/>
            <person name="Carninci P."/>
            <person name="Itoh M."/>
            <person name="Ishii Y."/>
            <person name="Arakawa T."/>
            <person name="Shibata K."/>
            <person name="Shinagawa A."/>
            <person name="Shinozaki K."/>
        </authorList>
    </citation>
    <scope>NUCLEOTIDE SEQUENCE [LARGE SCALE MRNA]</scope>
    <source>
        <strain>cv. Columbia</strain>
    </source>
</reference>
<reference key="4">
    <citation type="journal article" date="2003" name="Science">
        <title>Empirical analysis of transcriptional activity in the Arabidopsis genome.</title>
        <authorList>
            <person name="Yamada K."/>
            <person name="Lim J."/>
            <person name="Dale J.M."/>
            <person name="Chen H."/>
            <person name="Shinn P."/>
            <person name="Palm C.J."/>
            <person name="Southwick A.M."/>
            <person name="Wu H.C."/>
            <person name="Kim C.J."/>
            <person name="Nguyen M."/>
            <person name="Pham P.K."/>
            <person name="Cheuk R.F."/>
            <person name="Karlin-Newmann G."/>
            <person name="Liu S.X."/>
            <person name="Lam B."/>
            <person name="Sakano H."/>
            <person name="Wu T."/>
            <person name="Yu G."/>
            <person name="Miranda M."/>
            <person name="Quach H.L."/>
            <person name="Tripp M."/>
            <person name="Chang C.H."/>
            <person name="Lee J.M."/>
            <person name="Toriumi M.J."/>
            <person name="Chan M.M."/>
            <person name="Tang C.C."/>
            <person name="Onodera C.S."/>
            <person name="Deng J.M."/>
            <person name="Akiyama K."/>
            <person name="Ansari Y."/>
            <person name="Arakawa T."/>
            <person name="Banh J."/>
            <person name="Banno F."/>
            <person name="Bowser L."/>
            <person name="Brooks S.Y."/>
            <person name="Carninci P."/>
            <person name="Chao Q."/>
            <person name="Choy N."/>
            <person name="Enju A."/>
            <person name="Goldsmith A.D."/>
            <person name="Gurjal M."/>
            <person name="Hansen N.F."/>
            <person name="Hayashizaki Y."/>
            <person name="Johnson-Hopson C."/>
            <person name="Hsuan V.W."/>
            <person name="Iida K."/>
            <person name="Karnes M."/>
            <person name="Khan S."/>
            <person name="Koesema E."/>
            <person name="Ishida J."/>
            <person name="Jiang P.X."/>
            <person name="Jones T."/>
            <person name="Kawai J."/>
            <person name="Kamiya A."/>
            <person name="Meyers C."/>
            <person name="Nakajima M."/>
            <person name="Narusaka M."/>
            <person name="Seki M."/>
            <person name="Sakurai T."/>
            <person name="Satou M."/>
            <person name="Tamse R."/>
            <person name="Vaysberg M."/>
            <person name="Wallender E.K."/>
            <person name="Wong C."/>
            <person name="Yamamura Y."/>
            <person name="Yuan S."/>
            <person name="Shinozaki K."/>
            <person name="Davis R.W."/>
            <person name="Theologis A."/>
            <person name="Ecker J.R."/>
        </authorList>
    </citation>
    <scope>NUCLEOTIDE SEQUENCE [LARGE SCALE MRNA]</scope>
    <source>
        <strain>cv. Columbia</strain>
    </source>
</reference>
<reference key="5">
    <citation type="journal article" date="2009" name="DNA Res.">
        <title>Analysis of multiple occurrences of alternative splicing events in Arabidopsis thaliana using novel sequenced full-length cDNAs.</title>
        <authorList>
            <person name="Iida K."/>
            <person name="Fukami-Kobayashi K."/>
            <person name="Toyoda A."/>
            <person name="Sakaki Y."/>
            <person name="Kobayashi M."/>
            <person name="Seki M."/>
            <person name="Shinozaki K."/>
        </authorList>
    </citation>
    <scope>NUCLEOTIDE SEQUENCE [LARGE SCALE MRNA]</scope>
    <source>
        <strain>cv. Columbia</strain>
    </source>
</reference>
<reference key="6">
    <citation type="journal article" date="2014" name="Plant J.">
        <title>The tomato mutation nxd1 reveals a gene necessary for neoxanthin biosynthesis and demonstrates that violaxanthin is a sufficient precursor for abscisic acid biosynthesis.</title>
        <authorList>
            <person name="Neuman H."/>
            <person name="Galpaz N."/>
            <person name="Cunningham F.X. Jr."/>
            <person name="Zamir D."/>
            <person name="Hirschberg J."/>
        </authorList>
    </citation>
    <scope>FUNCTION</scope>
    <scope>DISRUPTION PHENOTYPE</scope>
</reference>
<accession>Q8GWB2</accession>
<accession>Q9C7E3</accession>
<feature type="chain" id="PRO_0000435895" description="Protein NEOXANTHIN-DEFICIENT 1">
    <location>
        <begin position="1"/>
        <end position="282"/>
    </location>
</feature>
<proteinExistence type="evidence at transcript level"/>
<protein>
    <recommendedName>
        <fullName evidence="2">Protein NEOXANTHIN-DEFICIENT 1</fullName>
    </recommendedName>
</protein>
<sequence>MDVEEKRVSSGYAKPPWIFKGSALYQIHLVKAATARAFIPKEFRLVEAFGYTLGGFFLASYDDSPAGVFDELVVIAGIVWNPPTSCAWAARVLVNSDEACHHGRKEVGLPSQVARFSKNITAVPKQKRDRAFGFLDTFGLGTTLSHPENLMEVKVSEVDSAASTDICNIQIRSDETKVGNWMGPAIKMALPSFSGNTIYNSNLLKYSCHLHCRVRPVRPAVVSGALEDETEKFTEQNHTSQESLENERQLSKAVMLSKPIIALQFKCLTMQVEAPVVIYPSK</sequence>
<dbReference type="EMBL" id="AC069471">
    <property type="protein sequence ID" value="AAG51493.1"/>
    <property type="status" value="ALT_SEQ"/>
    <property type="molecule type" value="Genomic_DNA"/>
</dbReference>
<dbReference type="EMBL" id="CP002684">
    <property type="protein sequence ID" value="AEE30913.1"/>
    <property type="molecule type" value="Genomic_DNA"/>
</dbReference>
<dbReference type="EMBL" id="CP002684">
    <property type="protein sequence ID" value="AEE30914.1"/>
    <property type="molecule type" value="Genomic_DNA"/>
</dbReference>
<dbReference type="EMBL" id="CP002684">
    <property type="protein sequence ID" value="AEE30915.1"/>
    <property type="molecule type" value="Genomic_DNA"/>
</dbReference>
<dbReference type="EMBL" id="CP002684">
    <property type="protein sequence ID" value="ANM57859.1"/>
    <property type="molecule type" value="Genomic_DNA"/>
</dbReference>
<dbReference type="EMBL" id="AK118960">
    <property type="protein sequence ID" value="BAC43539.1"/>
    <property type="molecule type" value="mRNA"/>
</dbReference>
<dbReference type="EMBL" id="BT005547">
    <property type="protein sequence ID" value="AAO63967.1"/>
    <property type="molecule type" value="mRNA"/>
</dbReference>
<dbReference type="EMBL" id="AK317602">
    <property type="protein sequence ID" value="BAH20265.1"/>
    <property type="molecule type" value="mRNA"/>
</dbReference>
<dbReference type="PIR" id="G86406">
    <property type="entry name" value="G86406"/>
</dbReference>
<dbReference type="RefSeq" id="NP_001320339.1">
    <molecule id="Q8GWB2-1"/>
    <property type="nucleotide sequence ID" value="NM_001332801.1"/>
</dbReference>
<dbReference type="RefSeq" id="NP_174131.3">
    <molecule id="Q8GWB2-1"/>
    <property type="nucleotide sequence ID" value="NM_102575.3"/>
</dbReference>
<dbReference type="RefSeq" id="NP_849717.1">
    <molecule id="Q8GWB2-1"/>
    <property type="nucleotide sequence ID" value="NM_179386.2"/>
</dbReference>
<dbReference type="RefSeq" id="NP_973925.2">
    <molecule id="Q8GWB2-1"/>
    <property type="nucleotide sequence ID" value="NM_202196.3"/>
</dbReference>
<dbReference type="FunCoup" id="Q8GWB2">
    <property type="interactions" value="123"/>
</dbReference>
<dbReference type="STRING" id="3702.Q8GWB2"/>
<dbReference type="iPTMnet" id="Q8GWB2"/>
<dbReference type="PaxDb" id="3702-AT1G28100.4"/>
<dbReference type="DNASU" id="839703"/>
<dbReference type="EnsemblPlants" id="AT1G28100.1">
    <molecule id="Q8GWB2-1"/>
    <property type="protein sequence ID" value="AT1G28100.1"/>
    <property type="gene ID" value="AT1G28100"/>
</dbReference>
<dbReference type="EnsemblPlants" id="AT1G28100.2">
    <molecule id="Q8GWB2-1"/>
    <property type="protein sequence ID" value="AT1G28100.2"/>
    <property type="gene ID" value="AT1G28100"/>
</dbReference>
<dbReference type="EnsemblPlants" id="AT1G28100.3">
    <molecule id="Q8GWB2-1"/>
    <property type="protein sequence ID" value="AT1G28100.3"/>
    <property type="gene ID" value="AT1G28100"/>
</dbReference>
<dbReference type="EnsemblPlants" id="AT1G28100.6">
    <molecule id="Q8GWB2-1"/>
    <property type="protein sequence ID" value="AT1G28100.6"/>
    <property type="gene ID" value="AT1G28100"/>
</dbReference>
<dbReference type="GeneID" id="839703"/>
<dbReference type="Gramene" id="AT1G28100.1">
    <molecule id="Q8GWB2-1"/>
    <property type="protein sequence ID" value="AT1G28100.1"/>
    <property type="gene ID" value="AT1G28100"/>
</dbReference>
<dbReference type="Gramene" id="AT1G28100.2">
    <molecule id="Q8GWB2-1"/>
    <property type="protein sequence ID" value="AT1G28100.2"/>
    <property type="gene ID" value="AT1G28100"/>
</dbReference>
<dbReference type="Gramene" id="AT1G28100.3">
    <molecule id="Q8GWB2-1"/>
    <property type="protein sequence ID" value="AT1G28100.3"/>
    <property type="gene ID" value="AT1G28100"/>
</dbReference>
<dbReference type="Gramene" id="AT1G28100.6">
    <molecule id="Q8GWB2-1"/>
    <property type="protein sequence ID" value="AT1G28100.6"/>
    <property type="gene ID" value="AT1G28100"/>
</dbReference>
<dbReference type="KEGG" id="ath:AT1G28100"/>
<dbReference type="Araport" id="AT1G28100"/>
<dbReference type="TAIR" id="AT1G28100"/>
<dbReference type="eggNOG" id="ENOG502QU37">
    <property type="taxonomic scope" value="Eukaryota"/>
</dbReference>
<dbReference type="InParanoid" id="Q8GWB2"/>
<dbReference type="PhylomeDB" id="Q8GWB2"/>
<dbReference type="PRO" id="PR:Q8GWB2"/>
<dbReference type="Proteomes" id="UP000006548">
    <property type="component" value="Chromosome 1"/>
</dbReference>
<dbReference type="ExpressionAtlas" id="Q8GWB2">
    <property type="expression patterns" value="baseline and differential"/>
</dbReference>
<dbReference type="GO" id="GO:0016123">
    <property type="term" value="P:xanthophyll biosynthetic process"/>
    <property type="evidence" value="ECO:0000315"/>
    <property type="project" value="UniProtKB"/>
</dbReference>
<dbReference type="FunFam" id="2.40.400.10:FF:000003">
    <property type="entry name" value="Protein NEOXANTHIN-DEFICIENT 1"/>
    <property type="match status" value="1"/>
</dbReference>
<dbReference type="Gene3D" id="2.40.400.10">
    <property type="entry name" value="Acetoacetate decarboxylase-like"/>
    <property type="match status" value="1"/>
</dbReference>
<dbReference type="InterPro" id="IPR023375">
    <property type="entry name" value="ADC_dom_sf"/>
</dbReference>
<dbReference type="InterPro" id="IPR039343">
    <property type="entry name" value="NDX1-like"/>
</dbReference>
<dbReference type="PANTHER" id="PTHR35467">
    <property type="match status" value="1"/>
</dbReference>
<dbReference type="PANTHER" id="PTHR35467:SF2">
    <property type="entry name" value="PROTEIN NEOXANTHIN-DEFICIENT 1"/>
    <property type="match status" value="1"/>
</dbReference>
<dbReference type="SUPFAM" id="SSF160104">
    <property type="entry name" value="Acetoacetate decarboxylase-like"/>
    <property type="match status" value="1"/>
</dbReference>
<comment type="function">
    <text evidence="1">Required for neoxanthin biosynthesis. Probably not involved directly in the enzymatic conversion of violaxanthin to neoxanthin. Is necessary but not sufficient for neoxanthin synthesis.</text>
</comment>
<comment type="alternative products">
    <event type="alternative splicing"/>
    <isoform>
        <id>Q8GWB2-1</id>
        <name>1</name>
        <sequence type="displayed"/>
    </isoform>
    <text evidence="3">A number of isoforms are produced. According to EST sequences.</text>
</comment>
<comment type="disruption phenotype">
    <text evidence="1">No visible phenotype under normal growth conditions, but mutant plants lack neoxanthin.</text>
</comment>
<comment type="sequence caution" evidence="3">
    <conflict type="erroneous gene model prediction">
        <sequence resource="EMBL-CDS" id="AAG51493"/>
    </conflict>
</comment>
<organism>
    <name type="scientific">Arabidopsis thaliana</name>
    <name type="common">Mouse-ear cress</name>
    <dbReference type="NCBI Taxonomy" id="3702"/>
    <lineage>
        <taxon>Eukaryota</taxon>
        <taxon>Viridiplantae</taxon>
        <taxon>Streptophyta</taxon>
        <taxon>Embryophyta</taxon>
        <taxon>Tracheophyta</taxon>
        <taxon>Spermatophyta</taxon>
        <taxon>Magnoliopsida</taxon>
        <taxon>eudicotyledons</taxon>
        <taxon>Gunneridae</taxon>
        <taxon>Pentapetalae</taxon>
        <taxon>rosids</taxon>
        <taxon>malvids</taxon>
        <taxon>Brassicales</taxon>
        <taxon>Brassicaceae</taxon>
        <taxon>Camelineae</taxon>
        <taxon>Arabidopsis</taxon>
    </lineage>
</organism>
<keyword id="KW-0025">Alternative splicing</keyword>
<keyword id="KW-1185">Reference proteome</keyword>
<gene>
    <name evidence="2" type="primary">NDX1</name>
    <name evidence="4" type="ordered locus">At1g28100</name>
    <name evidence="5" type="ORF">F13K9.27</name>
</gene>
<evidence type="ECO:0000269" key="1">
    <source>
    </source>
</evidence>
<evidence type="ECO:0000303" key="2">
    <source>
    </source>
</evidence>
<evidence type="ECO:0000305" key="3"/>
<evidence type="ECO:0000312" key="4">
    <source>
        <dbReference type="Araport" id="AT1G28100"/>
    </source>
</evidence>
<evidence type="ECO:0000312" key="5">
    <source>
        <dbReference type="EMBL" id="AAG51493.1"/>
    </source>
</evidence>
<name>NDX1_ARATH</name>